<comment type="function">
    <text evidence="1">Transcriptional regulator that controls expression of some virulence factors in a cell density-dependent manner.</text>
</comment>
<comment type="subcellular location">
    <subcellularLocation>
        <location evidence="1">Cytoplasm</location>
    </subcellularLocation>
</comment>
<comment type="similarity">
    <text evidence="3">Belongs to the SarA family.</text>
</comment>
<dbReference type="EMBL" id="BX571856">
    <property type="protein sequence ID" value="CAG39141.1"/>
    <property type="molecule type" value="Genomic_DNA"/>
</dbReference>
<dbReference type="RefSeq" id="WP_000876758.1">
    <property type="nucleotide sequence ID" value="NC_002952.2"/>
</dbReference>
<dbReference type="SMR" id="Q6GKJ3"/>
<dbReference type="KEGG" id="sar:SAR0115"/>
<dbReference type="HOGENOM" id="CLU_097164_0_0_9"/>
<dbReference type="Proteomes" id="UP000000596">
    <property type="component" value="Chromosome"/>
</dbReference>
<dbReference type="GO" id="GO:0005737">
    <property type="term" value="C:cytoplasm"/>
    <property type="evidence" value="ECO:0007669"/>
    <property type="project" value="UniProtKB-SubCell"/>
</dbReference>
<dbReference type="GO" id="GO:0003677">
    <property type="term" value="F:DNA binding"/>
    <property type="evidence" value="ECO:0007669"/>
    <property type="project" value="UniProtKB-KW"/>
</dbReference>
<dbReference type="GO" id="GO:0003700">
    <property type="term" value="F:DNA-binding transcription factor activity"/>
    <property type="evidence" value="ECO:0007669"/>
    <property type="project" value="InterPro"/>
</dbReference>
<dbReference type="GO" id="GO:0006950">
    <property type="term" value="P:response to stress"/>
    <property type="evidence" value="ECO:0007669"/>
    <property type="project" value="TreeGrafter"/>
</dbReference>
<dbReference type="Gene3D" id="1.10.10.10">
    <property type="entry name" value="Winged helix-like DNA-binding domain superfamily/Winged helix DNA-binding domain"/>
    <property type="match status" value="2"/>
</dbReference>
<dbReference type="InterPro" id="IPR000835">
    <property type="entry name" value="HTH_MarR-typ"/>
</dbReference>
<dbReference type="InterPro" id="IPR039422">
    <property type="entry name" value="MarR/SlyA-like"/>
</dbReference>
<dbReference type="InterPro" id="IPR010166">
    <property type="entry name" value="SarA/Rot_dom"/>
</dbReference>
<dbReference type="InterPro" id="IPR055166">
    <property type="entry name" value="Transc_reg_Sar_Rot_HTH"/>
</dbReference>
<dbReference type="InterPro" id="IPR036388">
    <property type="entry name" value="WH-like_DNA-bd_sf"/>
</dbReference>
<dbReference type="InterPro" id="IPR036390">
    <property type="entry name" value="WH_DNA-bd_sf"/>
</dbReference>
<dbReference type="NCBIfam" id="TIGR01889">
    <property type="entry name" value="Staph_reg_Sar"/>
    <property type="match status" value="2"/>
</dbReference>
<dbReference type="PANTHER" id="PTHR33164:SF5">
    <property type="entry name" value="ORGANIC HYDROPEROXIDE RESISTANCE TRANSCRIPTIONAL REGULATOR"/>
    <property type="match status" value="1"/>
</dbReference>
<dbReference type="PANTHER" id="PTHR33164">
    <property type="entry name" value="TRANSCRIPTIONAL REGULATOR, MARR FAMILY"/>
    <property type="match status" value="1"/>
</dbReference>
<dbReference type="Pfam" id="PF22381">
    <property type="entry name" value="Staph_reg_Sar_Rot"/>
    <property type="match status" value="2"/>
</dbReference>
<dbReference type="SMART" id="SM00347">
    <property type="entry name" value="HTH_MARR"/>
    <property type="match status" value="2"/>
</dbReference>
<dbReference type="SUPFAM" id="SSF46785">
    <property type="entry name" value="Winged helix' DNA-binding domain"/>
    <property type="match status" value="2"/>
</dbReference>
<accession>Q6GKJ3</accession>
<name>SARS_STAAR</name>
<proteinExistence type="inferred from homology"/>
<reference key="1">
    <citation type="journal article" date="2004" name="Proc. Natl. Acad. Sci. U.S.A.">
        <title>Complete genomes of two clinical Staphylococcus aureus strains: evidence for the rapid evolution of virulence and drug resistance.</title>
        <authorList>
            <person name="Holden M.T.G."/>
            <person name="Feil E.J."/>
            <person name="Lindsay J.A."/>
            <person name="Peacock S.J."/>
            <person name="Day N.P.J."/>
            <person name="Enright M.C."/>
            <person name="Foster T.J."/>
            <person name="Moore C.E."/>
            <person name="Hurst L."/>
            <person name="Atkin R."/>
            <person name="Barron A."/>
            <person name="Bason N."/>
            <person name="Bentley S.D."/>
            <person name="Chillingworth C."/>
            <person name="Chillingworth T."/>
            <person name="Churcher C."/>
            <person name="Clark L."/>
            <person name="Corton C."/>
            <person name="Cronin A."/>
            <person name="Doggett J."/>
            <person name="Dowd L."/>
            <person name="Feltwell T."/>
            <person name="Hance Z."/>
            <person name="Harris B."/>
            <person name="Hauser H."/>
            <person name="Holroyd S."/>
            <person name="Jagels K."/>
            <person name="James K.D."/>
            <person name="Lennard N."/>
            <person name="Line A."/>
            <person name="Mayes R."/>
            <person name="Moule S."/>
            <person name="Mungall K."/>
            <person name="Ormond D."/>
            <person name="Quail M.A."/>
            <person name="Rabbinowitsch E."/>
            <person name="Rutherford K.M."/>
            <person name="Sanders M."/>
            <person name="Sharp S."/>
            <person name="Simmonds M."/>
            <person name="Stevens K."/>
            <person name="Whitehead S."/>
            <person name="Barrell B.G."/>
            <person name="Spratt B.G."/>
            <person name="Parkhill J."/>
        </authorList>
    </citation>
    <scope>NUCLEOTIDE SEQUENCE [LARGE SCALE GENOMIC DNA]</scope>
    <source>
        <strain>MRSA252</strain>
    </source>
</reference>
<feature type="chain" id="PRO_0000219594" description="HTH-type transcriptional regulator SarS">
    <location>
        <begin position="1"/>
        <end position="250"/>
    </location>
</feature>
<feature type="DNA-binding region" description="H-T-H motif" evidence="2">
    <location>
        <begin position="53"/>
        <end position="76"/>
    </location>
</feature>
<feature type="DNA-binding region" description="H-T-H motif" evidence="2">
    <location>
        <begin position="177"/>
        <end position="200"/>
    </location>
</feature>
<protein>
    <recommendedName>
        <fullName>HTH-type transcriptional regulator SarS</fullName>
    </recommendedName>
    <alternativeName>
        <fullName>Staphylococcal accessory regulator S</fullName>
    </alternativeName>
</protein>
<keyword id="KW-0010">Activator</keyword>
<keyword id="KW-0963">Cytoplasm</keyword>
<keyword id="KW-0238">DNA-binding</keyword>
<keyword id="KW-0677">Repeat</keyword>
<keyword id="KW-0678">Repressor</keyword>
<keyword id="KW-0804">Transcription</keyword>
<keyword id="KW-0805">Transcription regulation</keyword>
<keyword id="KW-0843">Virulence</keyword>
<organism>
    <name type="scientific">Staphylococcus aureus (strain MRSA252)</name>
    <dbReference type="NCBI Taxonomy" id="282458"/>
    <lineage>
        <taxon>Bacteria</taxon>
        <taxon>Bacillati</taxon>
        <taxon>Bacillota</taxon>
        <taxon>Bacilli</taxon>
        <taxon>Bacillales</taxon>
        <taxon>Staphylococcaceae</taxon>
        <taxon>Staphylococcus</taxon>
    </lineage>
</organism>
<sequence>MKYNNHDKIRDFIIIEAYMFRFKKKVKPEVDMTIKEFILLTYLFHQQENTLPFKKIVSDLCYKQSDLVQHIKVLVKHSYISKVRSKIDERNTYISISEEQREKIAERVTLFDQIIKQFNLADQSESQMIPKDSKEFLNLMMYTMYFKNIIKKHLTLSFVEFTILAIITSQNKNIVLLKDLIETIHHKYPQTVRALNNLKKQGYLIKERSTEDERKILIHMNDAQQDHAEQLLAQVNQLLADKNHLHLVFE</sequence>
<gene>
    <name type="primary">sarS</name>
    <name type="ordered locus">SAR0115</name>
</gene>
<evidence type="ECO:0000250" key="1"/>
<evidence type="ECO:0000255" key="2"/>
<evidence type="ECO:0000305" key="3"/>